<proteinExistence type="inferred from homology"/>
<reference key="1">
    <citation type="journal article" date="2005" name="Nature">
        <title>Genomic sequence of the pathogenic and allergenic filamentous fungus Aspergillus fumigatus.</title>
        <authorList>
            <person name="Nierman W.C."/>
            <person name="Pain A."/>
            <person name="Anderson M.J."/>
            <person name="Wortman J.R."/>
            <person name="Kim H.S."/>
            <person name="Arroyo J."/>
            <person name="Berriman M."/>
            <person name="Abe K."/>
            <person name="Archer D.B."/>
            <person name="Bermejo C."/>
            <person name="Bennett J.W."/>
            <person name="Bowyer P."/>
            <person name="Chen D."/>
            <person name="Collins M."/>
            <person name="Coulsen R."/>
            <person name="Davies R."/>
            <person name="Dyer P.S."/>
            <person name="Farman M.L."/>
            <person name="Fedorova N."/>
            <person name="Fedorova N.D."/>
            <person name="Feldblyum T.V."/>
            <person name="Fischer R."/>
            <person name="Fosker N."/>
            <person name="Fraser A."/>
            <person name="Garcia J.L."/>
            <person name="Garcia M.J."/>
            <person name="Goble A."/>
            <person name="Goldman G.H."/>
            <person name="Gomi K."/>
            <person name="Griffith-Jones S."/>
            <person name="Gwilliam R."/>
            <person name="Haas B.J."/>
            <person name="Haas H."/>
            <person name="Harris D.E."/>
            <person name="Horiuchi H."/>
            <person name="Huang J."/>
            <person name="Humphray S."/>
            <person name="Jimenez J."/>
            <person name="Keller N."/>
            <person name="Khouri H."/>
            <person name="Kitamoto K."/>
            <person name="Kobayashi T."/>
            <person name="Konzack S."/>
            <person name="Kulkarni R."/>
            <person name="Kumagai T."/>
            <person name="Lafton A."/>
            <person name="Latge J.-P."/>
            <person name="Li W."/>
            <person name="Lord A."/>
            <person name="Lu C."/>
            <person name="Majoros W.H."/>
            <person name="May G.S."/>
            <person name="Miller B.L."/>
            <person name="Mohamoud Y."/>
            <person name="Molina M."/>
            <person name="Monod M."/>
            <person name="Mouyna I."/>
            <person name="Mulligan S."/>
            <person name="Murphy L.D."/>
            <person name="O'Neil S."/>
            <person name="Paulsen I."/>
            <person name="Penalva M.A."/>
            <person name="Pertea M."/>
            <person name="Price C."/>
            <person name="Pritchard B.L."/>
            <person name="Quail M.A."/>
            <person name="Rabbinowitsch E."/>
            <person name="Rawlins N."/>
            <person name="Rajandream M.A."/>
            <person name="Reichard U."/>
            <person name="Renauld H."/>
            <person name="Robson G.D."/>
            <person name="Rodriguez de Cordoba S."/>
            <person name="Rodriguez-Pena J.M."/>
            <person name="Ronning C.M."/>
            <person name="Rutter S."/>
            <person name="Salzberg S.L."/>
            <person name="Sanchez M."/>
            <person name="Sanchez-Ferrero J.C."/>
            <person name="Saunders D."/>
            <person name="Seeger K."/>
            <person name="Squares R."/>
            <person name="Squares S."/>
            <person name="Takeuchi M."/>
            <person name="Tekaia F."/>
            <person name="Turner G."/>
            <person name="Vazquez de Aldana C.R."/>
            <person name="Weidman J."/>
            <person name="White O."/>
            <person name="Woodward J.R."/>
            <person name="Yu J.-H."/>
            <person name="Fraser C.M."/>
            <person name="Galagan J.E."/>
            <person name="Asai K."/>
            <person name="Machida M."/>
            <person name="Hall N."/>
            <person name="Barrell B.G."/>
            <person name="Denning D.W."/>
        </authorList>
    </citation>
    <scope>NUCLEOTIDE SEQUENCE [LARGE SCALE GENOMIC DNA]</scope>
    <source>
        <strain>ATCC MYA-4609 / CBS 101355 / FGSC A1100 / Af293</strain>
    </source>
</reference>
<accession>Q4WK03</accession>
<organism>
    <name type="scientific">Aspergillus fumigatus (strain ATCC MYA-4609 / CBS 101355 / FGSC A1100 / Af293)</name>
    <name type="common">Neosartorya fumigata</name>
    <dbReference type="NCBI Taxonomy" id="330879"/>
    <lineage>
        <taxon>Eukaryota</taxon>
        <taxon>Fungi</taxon>
        <taxon>Dikarya</taxon>
        <taxon>Ascomycota</taxon>
        <taxon>Pezizomycotina</taxon>
        <taxon>Eurotiomycetes</taxon>
        <taxon>Eurotiomycetidae</taxon>
        <taxon>Eurotiales</taxon>
        <taxon>Aspergillaceae</taxon>
        <taxon>Aspergillus</taxon>
        <taxon>Aspergillus subgen. Fumigati</taxon>
    </lineage>
</organism>
<keyword id="KW-0963">Cytoplasm</keyword>
<keyword id="KW-0507">mRNA processing</keyword>
<keyword id="KW-0509">mRNA transport</keyword>
<keyword id="KW-0539">Nucleus</keyword>
<keyword id="KW-1185">Reference proteome</keyword>
<keyword id="KW-0677">Repeat</keyword>
<keyword id="KW-0694">RNA-binding</keyword>
<keyword id="KW-0810">Translation regulation</keyword>
<keyword id="KW-0813">Transport</keyword>
<name>PABP_ASPFU</name>
<feature type="chain" id="PRO_0000295380" description="Polyadenylate-binding protein, cytoplasmic and nuclear">
    <location>
        <begin position="1"/>
        <end position="753"/>
    </location>
</feature>
<feature type="domain" description="RRM 1" evidence="2">
    <location>
        <begin position="52"/>
        <end position="130"/>
    </location>
</feature>
<feature type="domain" description="RRM 2" evidence="2">
    <location>
        <begin position="140"/>
        <end position="217"/>
    </location>
</feature>
<feature type="domain" description="RRM 3" evidence="2">
    <location>
        <begin position="233"/>
        <end position="310"/>
    </location>
</feature>
<feature type="domain" description="RRM 4" evidence="2">
    <location>
        <begin position="336"/>
        <end position="460"/>
    </location>
</feature>
<feature type="domain" description="PABC" evidence="3">
    <location>
        <begin position="648"/>
        <end position="725"/>
    </location>
</feature>
<feature type="region of interest" description="Disordered" evidence="4">
    <location>
        <begin position="1"/>
        <end position="52"/>
    </location>
</feature>
<feature type="region of interest" description="Disordered" evidence="4">
    <location>
        <begin position="367"/>
        <end position="417"/>
    </location>
</feature>
<feature type="region of interest" description="Disordered" evidence="4">
    <location>
        <begin position="602"/>
        <end position="645"/>
    </location>
</feature>
<feature type="region of interest" description="Disordered" evidence="4">
    <location>
        <begin position="728"/>
        <end position="753"/>
    </location>
</feature>
<feature type="compositionally biased region" description="Polar residues" evidence="4">
    <location>
        <begin position="1"/>
        <end position="26"/>
    </location>
</feature>
<feature type="compositionally biased region" description="Low complexity" evidence="4">
    <location>
        <begin position="37"/>
        <end position="52"/>
    </location>
</feature>
<feature type="compositionally biased region" description="Basic and acidic residues" evidence="4">
    <location>
        <begin position="379"/>
        <end position="417"/>
    </location>
</feature>
<feature type="compositionally biased region" description="Gly residues" evidence="4">
    <location>
        <begin position="605"/>
        <end position="631"/>
    </location>
</feature>
<feature type="compositionally biased region" description="Basic and acidic residues" evidence="4">
    <location>
        <begin position="737"/>
        <end position="753"/>
    </location>
</feature>
<protein>
    <recommendedName>
        <fullName>Polyadenylate-binding protein, cytoplasmic and nuclear</fullName>
        <shortName>PABP</shortName>
        <shortName>Poly(A)-binding protein</shortName>
    </recommendedName>
    <alternativeName>
        <fullName>Polyadenylate tail-binding protein</fullName>
    </alternativeName>
</protein>
<gene>
    <name type="primary">pab1</name>
    <name type="ORF">AFUA_1G04190</name>
</gene>
<comment type="function">
    <text evidence="1">Binds the poly(A) tail of mRNA. Appears to be an important mediator of the multiple roles of the poly(A) tail in mRNA biogenesis, stability and translation. In the nucleus, involved in both mRNA cleavage and polyadenylation. Is also required for efficient mRNA export to the cytoplasm. Acts in concert with a poly(A)-specific nuclease (PAN) to affect poly(A) tail shortening, which may occur concomitantly with either nucleocytoplasmic mRNA transport or translational initiation. In the cytoplasm, stimulates translation initiation and regulates mRNA decay through translation termination-coupled poly(A) shortening, probably mediated by PAN (By similarity).</text>
</comment>
<comment type="subcellular location">
    <subcellularLocation>
        <location evidence="1">Cytoplasm</location>
    </subcellularLocation>
    <subcellularLocation>
        <location evidence="1">Nucleus</location>
    </subcellularLocation>
</comment>
<comment type="similarity">
    <text evidence="5">Belongs to the polyadenylate-binding protein type-1 family.</text>
</comment>
<sequence length="753" mass="81445">MSAEVSTTPAADNTVNGTPEATNAAATSAPEVTAVESASPSTTPSASQPHSASLYVGELDPSVTEAMLYELFSSIGQVASIRVCRDAVTRRSLGYAYVNYNNTADGERALEDLNYTLIKGKPCRIMWSQRDPALRKTGQGNVFIKNLDAAIDNKALHDTFAAFGNILSCKVAQDEFGNSKGYGFVHYETAEAANNAIKHVNGMLLNDKKVFVGHHISKKDRQSKFEEMKANFTNVYIKNIDQEVTDEEFRKMFEKFGEITSATLSRDQEGKSRGFGFVNFSTHDSAQAAVDEMNDKEIKGQKLYVGRAQKKHEREEELRKQYEAARLEKASKYQGVNLYVKNLTDDVDDEKLRELFSPFGTITSAKVMRDTVTTGETSESEKEKEKESNKENEKEGEEKTEEKPKESEEEPKKTEKKILGKSKGFGFVCFSSPDEASKAVTEMNQRMVNGKPLYVALAQRKDVRRSQLEASIQARNTIRQQQAAAAAGMPQPYMQPAVFYGPGQQGFIPAGQRGGMPFAPQPGMVMGIPGGRPGQYPGPFPGQQGGRGMGPNQQIPPNFQGIPMGAMQGPGGIPNGMGYPQMAQVQFGRGAGGRGQVPGMPMGQGIRGPGYGQGRGGAPVQGGPRPQGGRGQPAAAPPAAGREEVPATGGLTAQTLSAVPPPQQKQMLGEALYPKIQAQQPELAGKITGMLLEMDNNELLGLLEDEEALRAKVDEALSVYDEYMKNKGEGEAPAESAKPKEDAAETATEENKS</sequence>
<evidence type="ECO:0000250" key="1"/>
<evidence type="ECO:0000255" key="2">
    <source>
        <dbReference type="PROSITE-ProRule" id="PRU00176"/>
    </source>
</evidence>
<evidence type="ECO:0000255" key="3">
    <source>
        <dbReference type="PROSITE-ProRule" id="PRU00641"/>
    </source>
</evidence>
<evidence type="ECO:0000256" key="4">
    <source>
        <dbReference type="SAM" id="MobiDB-lite"/>
    </source>
</evidence>
<evidence type="ECO:0000305" key="5"/>
<dbReference type="EMBL" id="AAHF01000007">
    <property type="protein sequence ID" value="EAL88129.1"/>
    <property type="molecule type" value="Genomic_DNA"/>
</dbReference>
<dbReference type="RefSeq" id="XP_750167.1">
    <property type="nucleotide sequence ID" value="XM_745074.1"/>
</dbReference>
<dbReference type="SMR" id="Q4WK03"/>
<dbReference type="FunCoup" id="Q4WK03">
    <property type="interactions" value="1273"/>
</dbReference>
<dbReference type="STRING" id="330879.Q4WK03"/>
<dbReference type="SwissPalm" id="Q4WK03"/>
<dbReference type="EnsemblFungi" id="EAL88129">
    <property type="protein sequence ID" value="EAL88129"/>
    <property type="gene ID" value="AFUA_1G04190"/>
</dbReference>
<dbReference type="GeneID" id="3507350"/>
<dbReference type="KEGG" id="afm:AFUA_1G04190"/>
<dbReference type="VEuPathDB" id="FungiDB:Afu1g04190"/>
<dbReference type="eggNOG" id="KOG0123">
    <property type="taxonomic scope" value="Eukaryota"/>
</dbReference>
<dbReference type="HOGENOM" id="CLU_012062_22_4_1"/>
<dbReference type="InParanoid" id="Q4WK03"/>
<dbReference type="OMA" id="QQPGFMP"/>
<dbReference type="OrthoDB" id="19742at2759"/>
<dbReference type="PHI-base" id="PHI:2544"/>
<dbReference type="Proteomes" id="UP000002530">
    <property type="component" value="Chromosome 1"/>
</dbReference>
<dbReference type="GO" id="GO:0010494">
    <property type="term" value="C:cytoplasmic stress granule"/>
    <property type="evidence" value="ECO:0000318"/>
    <property type="project" value="GO_Central"/>
</dbReference>
<dbReference type="GO" id="GO:0005829">
    <property type="term" value="C:cytosol"/>
    <property type="evidence" value="ECO:0000318"/>
    <property type="project" value="GO_Central"/>
</dbReference>
<dbReference type="GO" id="GO:0005634">
    <property type="term" value="C:nucleus"/>
    <property type="evidence" value="ECO:0000318"/>
    <property type="project" value="GO_Central"/>
</dbReference>
<dbReference type="GO" id="GO:1990904">
    <property type="term" value="C:ribonucleoprotein complex"/>
    <property type="evidence" value="ECO:0000318"/>
    <property type="project" value="GO_Central"/>
</dbReference>
<dbReference type="GO" id="GO:0003730">
    <property type="term" value="F:mRNA 3'-UTR binding"/>
    <property type="evidence" value="ECO:0000318"/>
    <property type="project" value="GO_Central"/>
</dbReference>
<dbReference type="GO" id="GO:0008143">
    <property type="term" value="F:poly(A) binding"/>
    <property type="evidence" value="ECO:0000318"/>
    <property type="project" value="GO_Central"/>
</dbReference>
<dbReference type="GO" id="GO:0008266">
    <property type="term" value="F:poly(U) RNA binding"/>
    <property type="evidence" value="ECO:0000318"/>
    <property type="project" value="GO_Central"/>
</dbReference>
<dbReference type="GO" id="GO:0006397">
    <property type="term" value="P:mRNA processing"/>
    <property type="evidence" value="ECO:0007669"/>
    <property type="project" value="UniProtKB-KW"/>
</dbReference>
<dbReference type="GO" id="GO:0051028">
    <property type="term" value="P:mRNA transport"/>
    <property type="evidence" value="ECO:0007669"/>
    <property type="project" value="UniProtKB-KW"/>
</dbReference>
<dbReference type="GO" id="GO:0006417">
    <property type="term" value="P:regulation of translation"/>
    <property type="evidence" value="ECO:0007669"/>
    <property type="project" value="UniProtKB-KW"/>
</dbReference>
<dbReference type="CDD" id="cd12378">
    <property type="entry name" value="RRM1_I_PABPs"/>
    <property type="match status" value="1"/>
</dbReference>
<dbReference type="CDD" id="cd12379">
    <property type="entry name" value="RRM2_I_PABPs"/>
    <property type="match status" value="1"/>
</dbReference>
<dbReference type="CDD" id="cd12380">
    <property type="entry name" value="RRM3_I_PABPs"/>
    <property type="match status" value="1"/>
</dbReference>
<dbReference type="CDD" id="cd12381">
    <property type="entry name" value="RRM4_I_PABPs"/>
    <property type="match status" value="1"/>
</dbReference>
<dbReference type="FunFam" id="1.10.1900.10:FF:000004">
    <property type="entry name" value="Polyadenylate-binding protein"/>
    <property type="match status" value="1"/>
</dbReference>
<dbReference type="FunFam" id="3.30.70.330:FF:000003">
    <property type="entry name" value="Polyadenylate-binding protein"/>
    <property type="match status" value="1"/>
</dbReference>
<dbReference type="FunFam" id="3.30.70.330:FF:000355">
    <property type="entry name" value="Polyadenylate-binding protein"/>
    <property type="match status" value="1"/>
</dbReference>
<dbReference type="FunFam" id="3.30.70.330:FF:000384">
    <property type="entry name" value="Polyadenylate-binding protein"/>
    <property type="match status" value="1"/>
</dbReference>
<dbReference type="Gene3D" id="3.30.70.330">
    <property type="match status" value="4"/>
</dbReference>
<dbReference type="Gene3D" id="1.10.1900.10">
    <property type="entry name" value="c-terminal domain of poly(a) binding protein"/>
    <property type="match status" value="1"/>
</dbReference>
<dbReference type="InterPro" id="IPR012677">
    <property type="entry name" value="Nucleotide-bd_a/b_plait_sf"/>
</dbReference>
<dbReference type="InterPro" id="IPR036053">
    <property type="entry name" value="PABP-dom"/>
</dbReference>
<dbReference type="InterPro" id="IPR006515">
    <property type="entry name" value="PABP_1234"/>
</dbReference>
<dbReference type="InterPro" id="IPR002004">
    <property type="entry name" value="PABP_HYD_C"/>
</dbReference>
<dbReference type="InterPro" id="IPR034364">
    <property type="entry name" value="PABP_RRM1"/>
</dbReference>
<dbReference type="InterPro" id="IPR035979">
    <property type="entry name" value="RBD_domain_sf"/>
</dbReference>
<dbReference type="InterPro" id="IPR045305">
    <property type="entry name" value="RRM2_I_PABPs"/>
</dbReference>
<dbReference type="InterPro" id="IPR000504">
    <property type="entry name" value="RRM_dom"/>
</dbReference>
<dbReference type="InterPro" id="IPR003954">
    <property type="entry name" value="RRM_dom_euk"/>
</dbReference>
<dbReference type="NCBIfam" id="TIGR01628">
    <property type="entry name" value="PABP-1234"/>
    <property type="match status" value="1"/>
</dbReference>
<dbReference type="PANTHER" id="PTHR24012">
    <property type="entry name" value="RNA BINDING PROTEIN"/>
    <property type="match status" value="1"/>
</dbReference>
<dbReference type="Pfam" id="PF00658">
    <property type="entry name" value="MLLE"/>
    <property type="match status" value="1"/>
</dbReference>
<dbReference type="Pfam" id="PF00076">
    <property type="entry name" value="RRM_1"/>
    <property type="match status" value="5"/>
</dbReference>
<dbReference type="SMART" id="SM00517">
    <property type="entry name" value="PolyA"/>
    <property type="match status" value="1"/>
</dbReference>
<dbReference type="SMART" id="SM00360">
    <property type="entry name" value="RRM"/>
    <property type="match status" value="4"/>
</dbReference>
<dbReference type="SMART" id="SM00361">
    <property type="entry name" value="RRM_1"/>
    <property type="match status" value="4"/>
</dbReference>
<dbReference type="SUPFAM" id="SSF63570">
    <property type="entry name" value="PABC (PABP) domain"/>
    <property type="match status" value="1"/>
</dbReference>
<dbReference type="SUPFAM" id="SSF54928">
    <property type="entry name" value="RNA-binding domain, RBD"/>
    <property type="match status" value="3"/>
</dbReference>
<dbReference type="PROSITE" id="PS51309">
    <property type="entry name" value="PABC"/>
    <property type="match status" value="1"/>
</dbReference>
<dbReference type="PROSITE" id="PS50102">
    <property type="entry name" value="RRM"/>
    <property type="match status" value="4"/>
</dbReference>